<name>KUP_YERPS</name>
<evidence type="ECO:0000255" key="1">
    <source>
        <dbReference type="HAMAP-Rule" id="MF_01522"/>
    </source>
</evidence>
<dbReference type="EMBL" id="BX936398">
    <property type="protein sequence ID" value="CAH19246.1"/>
    <property type="molecule type" value="Genomic_DNA"/>
</dbReference>
<dbReference type="RefSeq" id="WP_011191440.1">
    <property type="nucleotide sequence ID" value="NC_006155.1"/>
</dbReference>
<dbReference type="GeneID" id="49788031"/>
<dbReference type="KEGG" id="ypo:BZ17_2593"/>
<dbReference type="KEGG" id="yps:YPTB0006"/>
<dbReference type="PATRIC" id="fig|273123.14.peg.2719"/>
<dbReference type="Proteomes" id="UP000001011">
    <property type="component" value="Chromosome"/>
</dbReference>
<dbReference type="GO" id="GO:0005886">
    <property type="term" value="C:plasma membrane"/>
    <property type="evidence" value="ECO:0007669"/>
    <property type="project" value="UniProtKB-SubCell"/>
</dbReference>
<dbReference type="GO" id="GO:0015079">
    <property type="term" value="F:potassium ion transmembrane transporter activity"/>
    <property type="evidence" value="ECO:0007669"/>
    <property type="project" value="UniProtKB-UniRule"/>
</dbReference>
<dbReference type="GO" id="GO:0015293">
    <property type="term" value="F:symporter activity"/>
    <property type="evidence" value="ECO:0007669"/>
    <property type="project" value="UniProtKB-UniRule"/>
</dbReference>
<dbReference type="HAMAP" id="MF_01522">
    <property type="entry name" value="Kup"/>
    <property type="match status" value="1"/>
</dbReference>
<dbReference type="InterPro" id="IPR003855">
    <property type="entry name" value="K+_transporter"/>
</dbReference>
<dbReference type="InterPro" id="IPR053952">
    <property type="entry name" value="K_trans_C"/>
</dbReference>
<dbReference type="InterPro" id="IPR053951">
    <property type="entry name" value="K_trans_N"/>
</dbReference>
<dbReference type="InterPro" id="IPR023051">
    <property type="entry name" value="Kup"/>
</dbReference>
<dbReference type="NCBIfam" id="TIGR00794">
    <property type="entry name" value="kup"/>
    <property type="match status" value="1"/>
</dbReference>
<dbReference type="NCBIfam" id="NF008015">
    <property type="entry name" value="PRK10745.1"/>
    <property type="match status" value="1"/>
</dbReference>
<dbReference type="PANTHER" id="PTHR30540:SF79">
    <property type="entry name" value="LOW AFFINITY POTASSIUM TRANSPORT SYSTEM PROTEIN KUP"/>
    <property type="match status" value="1"/>
</dbReference>
<dbReference type="PANTHER" id="PTHR30540">
    <property type="entry name" value="OSMOTIC STRESS POTASSIUM TRANSPORTER"/>
    <property type="match status" value="1"/>
</dbReference>
<dbReference type="Pfam" id="PF02705">
    <property type="entry name" value="K_trans"/>
    <property type="match status" value="1"/>
</dbReference>
<dbReference type="Pfam" id="PF22776">
    <property type="entry name" value="K_trans_C"/>
    <property type="match status" value="1"/>
</dbReference>
<protein>
    <recommendedName>
        <fullName evidence="1">Low affinity potassium transport system protein Kup</fullName>
    </recommendedName>
    <alternativeName>
        <fullName evidence="1">Kup system potassium uptake protein</fullName>
    </alternativeName>
</protein>
<reference key="1">
    <citation type="journal article" date="2004" name="Proc. Natl. Acad. Sci. U.S.A.">
        <title>Insights into the evolution of Yersinia pestis through whole-genome comparison with Yersinia pseudotuberculosis.</title>
        <authorList>
            <person name="Chain P.S.G."/>
            <person name="Carniel E."/>
            <person name="Larimer F.W."/>
            <person name="Lamerdin J."/>
            <person name="Stoutland P.O."/>
            <person name="Regala W.M."/>
            <person name="Georgescu A.M."/>
            <person name="Vergez L.M."/>
            <person name="Land M.L."/>
            <person name="Motin V.L."/>
            <person name="Brubaker R.R."/>
            <person name="Fowler J."/>
            <person name="Hinnebusch J."/>
            <person name="Marceau M."/>
            <person name="Medigue C."/>
            <person name="Simonet M."/>
            <person name="Chenal-Francisque V."/>
            <person name="Souza B."/>
            <person name="Dacheux D."/>
            <person name="Elliott J.M."/>
            <person name="Derbise A."/>
            <person name="Hauser L.J."/>
            <person name="Garcia E."/>
        </authorList>
    </citation>
    <scope>NUCLEOTIDE SEQUENCE [LARGE SCALE GENOMIC DNA]</scope>
    <source>
        <strain>IP32953</strain>
    </source>
</reference>
<proteinExistence type="inferred from homology"/>
<feature type="chain" id="PRO_0000209074" description="Low affinity potassium transport system protein Kup">
    <location>
        <begin position="1"/>
        <end position="622"/>
    </location>
</feature>
<feature type="transmembrane region" description="Helical" evidence="1">
    <location>
        <begin position="9"/>
        <end position="29"/>
    </location>
</feature>
<feature type="transmembrane region" description="Helical" evidence="1">
    <location>
        <begin position="46"/>
        <end position="66"/>
    </location>
</feature>
<feature type="transmembrane region" description="Helical" evidence="1">
    <location>
        <begin position="101"/>
        <end position="121"/>
    </location>
</feature>
<feature type="transmembrane region" description="Helical" evidence="1">
    <location>
        <begin position="137"/>
        <end position="157"/>
    </location>
</feature>
<feature type="transmembrane region" description="Helical" evidence="1">
    <location>
        <begin position="165"/>
        <end position="185"/>
    </location>
</feature>
<feature type="transmembrane region" description="Helical" evidence="1">
    <location>
        <begin position="213"/>
        <end position="233"/>
    </location>
</feature>
<feature type="transmembrane region" description="Helical" evidence="1">
    <location>
        <begin position="247"/>
        <end position="267"/>
    </location>
</feature>
<feature type="transmembrane region" description="Helical" evidence="1">
    <location>
        <begin position="276"/>
        <end position="296"/>
    </location>
</feature>
<feature type="transmembrane region" description="Helical" evidence="1">
    <location>
        <begin position="337"/>
        <end position="357"/>
    </location>
</feature>
<feature type="transmembrane region" description="Helical" evidence="1">
    <location>
        <begin position="363"/>
        <end position="383"/>
    </location>
</feature>
<feature type="transmembrane region" description="Helical" evidence="1">
    <location>
        <begin position="395"/>
        <end position="415"/>
    </location>
</feature>
<feature type="transmembrane region" description="Helical" evidence="1">
    <location>
        <begin position="416"/>
        <end position="436"/>
    </location>
</feature>
<sequence length="622" mass="69012">MSTEHKQSLSAVTLAAIGVVYGDIGTSPLYTLRECFSGHYGFDVRPDVVFGFLSLIFWMLILVVSVKYLTYVMRADNAGEGGILTLMSLAGRNTSSRATSILVVLGLIGGSFFYGEVVITPAISVMSAIEGLEIAAPALDPYIVPCSIAVLTLLFVIQKHGTGSVGKLFAPVMLVWFLTLALLGLRSIIANPEVLAALNPKWAISFFVEYKSVSFFALGAVVLAITGVEALYADMGHFGKFPIRLAWFTVVLPSLVLNYFGQGALLLKNPEAIKNPFFLLAPDWALIPLLILATLATVIASQAVISGVFSLTRQAVRLGYLPPMRIIHTSEMESGQIYIPVINWTLYLAVVLVIIGFERSSNLAAAYGIAVTGTMVITSILFCTVAWKNWHWNRFLVAFLLMVLLIIDIPMFSANVLKLFSGGWLPLSLGLVMFIIMTTWKSERFSLLRRMHEHSNSLEAMIASLEKSPPVRVPGTAVYMSRAMNVIPFALLHNLKHNKVLHERVVLLTMRTDDVPYVHNVERVTIEQLSPTFWRVVARYGWRETPNVAEIFHRCGLEGLSCQMMETSFFMSHESLILTKRPWHLFLRGKLFIALSRNALRAPDQFEIPPNRVIELGTQVEI</sequence>
<keyword id="KW-0997">Cell inner membrane</keyword>
<keyword id="KW-1003">Cell membrane</keyword>
<keyword id="KW-0406">Ion transport</keyword>
<keyword id="KW-0472">Membrane</keyword>
<keyword id="KW-0630">Potassium</keyword>
<keyword id="KW-0633">Potassium transport</keyword>
<keyword id="KW-0769">Symport</keyword>
<keyword id="KW-0812">Transmembrane</keyword>
<keyword id="KW-1133">Transmembrane helix</keyword>
<keyword id="KW-0813">Transport</keyword>
<gene>
    <name evidence="1" type="primary">kup</name>
    <name type="synonym">trkD</name>
    <name type="ordered locus">YPTB0006</name>
</gene>
<comment type="function">
    <text evidence="1">Responsible for the low-affinity transport of potassium into the cell. Likely operates as a K(+):H(+) symporter.</text>
</comment>
<comment type="catalytic activity">
    <reaction evidence="1">
        <text>K(+)(in) + H(+)(in) = K(+)(out) + H(+)(out)</text>
        <dbReference type="Rhea" id="RHEA:28490"/>
        <dbReference type="ChEBI" id="CHEBI:15378"/>
        <dbReference type="ChEBI" id="CHEBI:29103"/>
    </reaction>
    <physiologicalReaction direction="right-to-left" evidence="1">
        <dbReference type="Rhea" id="RHEA:28492"/>
    </physiologicalReaction>
</comment>
<comment type="subcellular location">
    <subcellularLocation>
        <location evidence="1">Cell inner membrane</location>
        <topology evidence="1">Multi-pass membrane protein</topology>
    </subcellularLocation>
</comment>
<comment type="similarity">
    <text evidence="1">Belongs to the HAK/KUP transporter (TC 2.A.72) family.</text>
</comment>
<organism>
    <name type="scientific">Yersinia pseudotuberculosis serotype I (strain IP32953)</name>
    <dbReference type="NCBI Taxonomy" id="273123"/>
    <lineage>
        <taxon>Bacteria</taxon>
        <taxon>Pseudomonadati</taxon>
        <taxon>Pseudomonadota</taxon>
        <taxon>Gammaproteobacteria</taxon>
        <taxon>Enterobacterales</taxon>
        <taxon>Yersiniaceae</taxon>
        <taxon>Yersinia</taxon>
    </lineage>
</organism>
<accession>Q66GH5</accession>